<keyword id="KW-0963">Cytoplasm</keyword>
<keyword id="KW-0539">Nucleus</keyword>
<keyword id="KW-1185">Reference proteome</keyword>
<reference evidence="3 4" key="1">
    <citation type="journal article" date="1994" name="Chromosoma">
        <title>A Drosophila melanogaster chromosome-2L repeat is expressed in the male germ line.</title>
        <authorList>
            <person name="Russell S.R.H."/>
            <person name="Kaiser K."/>
        </authorList>
    </citation>
    <scope>NUCLEOTIDE SEQUENCE [GENOMIC DNA]</scope>
    <scope>TISSUE SPECIFICITY</scope>
    <scope>SUBCELLULAR LOCATION</scope>
    <source>
        <strain evidence="4">Oregon-R</strain>
    </source>
</reference>
<reference evidence="3" key="2">
    <citation type="journal article" date="2000" name="Science">
        <title>The genome sequence of Drosophila melanogaster.</title>
        <authorList>
            <person name="Adams M.D."/>
            <person name="Celniker S.E."/>
            <person name="Holt R.A."/>
            <person name="Evans C.A."/>
            <person name="Gocayne J.D."/>
            <person name="Amanatides P.G."/>
            <person name="Scherer S.E."/>
            <person name="Li P.W."/>
            <person name="Hoskins R.A."/>
            <person name="Galle R.F."/>
            <person name="George R.A."/>
            <person name="Lewis S.E."/>
            <person name="Richards S."/>
            <person name="Ashburner M."/>
            <person name="Henderson S.N."/>
            <person name="Sutton G.G."/>
            <person name="Wortman J.R."/>
            <person name="Yandell M.D."/>
            <person name="Zhang Q."/>
            <person name="Chen L.X."/>
            <person name="Brandon R.C."/>
            <person name="Rogers Y.-H.C."/>
            <person name="Blazej R.G."/>
            <person name="Champe M."/>
            <person name="Pfeiffer B.D."/>
            <person name="Wan K.H."/>
            <person name="Doyle C."/>
            <person name="Baxter E.G."/>
            <person name="Helt G."/>
            <person name="Nelson C.R."/>
            <person name="Miklos G.L.G."/>
            <person name="Abril J.F."/>
            <person name="Agbayani A."/>
            <person name="An H.-J."/>
            <person name="Andrews-Pfannkoch C."/>
            <person name="Baldwin D."/>
            <person name="Ballew R.M."/>
            <person name="Basu A."/>
            <person name="Baxendale J."/>
            <person name="Bayraktaroglu L."/>
            <person name="Beasley E.M."/>
            <person name="Beeson K.Y."/>
            <person name="Benos P.V."/>
            <person name="Berman B.P."/>
            <person name="Bhandari D."/>
            <person name="Bolshakov S."/>
            <person name="Borkova D."/>
            <person name="Botchan M.R."/>
            <person name="Bouck J."/>
            <person name="Brokstein P."/>
            <person name="Brottier P."/>
            <person name="Burtis K.C."/>
            <person name="Busam D.A."/>
            <person name="Butler H."/>
            <person name="Cadieu E."/>
            <person name="Center A."/>
            <person name="Chandra I."/>
            <person name="Cherry J.M."/>
            <person name="Cawley S."/>
            <person name="Dahlke C."/>
            <person name="Davenport L.B."/>
            <person name="Davies P."/>
            <person name="de Pablos B."/>
            <person name="Delcher A."/>
            <person name="Deng Z."/>
            <person name="Mays A.D."/>
            <person name="Dew I."/>
            <person name="Dietz S.M."/>
            <person name="Dodson K."/>
            <person name="Doup L.E."/>
            <person name="Downes M."/>
            <person name="Dugan-Rocha S."/>
            <person name="Dunkov B.C."/>
            <person name="Dunn P."/>
            <person name="Durbin K.J."/>
            <person name="Evangelista C.C."/>
            <person name="Ferraz C."/>
            <person name="Ferriera S."/>
            <person name="Fleischmann W."/>
            <person name="Fosler C."/>
            <person name="Gabrielian A.E."/>
            <person name="Garg N.S."/>
            <person name="Gelbart W.M."/>
            <person name="Glasser K."/>
            <person name="Glodek A."/>
            <person name="Gong F."/>
            <person name="Gorrell J.H."/>
            <person name="Gu Z."/>
            <person name="Guan P."/>
            <person name="Harris M."/>
            <person name="Harris N.L."/>
            <person name="Harvey D.A."/>
            <person name="Heiman T.J."/>
            <person name="Hernandez J.R."/>
            <person name="Houck J."/>
            <person name="Hostin D."/>
            <person name="Houston K.A."/>
            <person name="Howland T.J."/>
            <person name="Wei M.-H."/>
            <person name="Ibegwam C."/>
            <person name="Jalali M."/>
            <person name="Kalush F."/>
            <person name="Karpen G.H."/>
            <person name="Ke Z."/>
            <person name="Kennison J.A."/>
            <person name="Ketchum K.A."/>
            <person name="Kimmel B.E."/>
            <person name="Kodira C.D."/>
            <person name="Kraft C.L."/>
            <person name="Kravitz S."/>
            <person name="Kulp D."/>
            <person name="Lai Z."/>
            <person name="Lasko P."/>
            <person name="Lei Y."/>
            <person name="Levitsky A.A."/>
            <person name="Li J.H."/>
            <person name="Li Z."/>
            <person name="Liang Y."/>
            <person name="Lin X."/>
            <person name="Liu X."/>
            <person name="Mattei B."/>
            <person name="McIntosh T.C."/>
            <person name="McLeod M.P."/>
            <person name="McPherson D."/>
            <person name="Merkulov G."/>
            <person name="Milshina N.V."/>
            <person name="Mobarry C."/>
            <person name="Morris J."/>
            <person name="Moshrefi A."/>
            <person name="Mount S.M."/>
            <person name="Moy M."/>
            <person name="Murphy B."/>
            <person name="Murphy L."/>
            <person name="Muzny D.M."/>
            <person name="Nelson D.L."/>
            <person name="Nelson D.R."/>
            <person name="Nelson K.A."/>
            <person name="Nixon K."/>
            <person name="Nusskern D.R."/>
            <person name="Pacleb J.M."/>
            <person name="Palazzolo M."/>
            <person name="Pittman G.S."/>
            <person name="Pan S."/>
            <person name="Pollard J."/>
            <person name="Puri V."/>
            <person name="Reese M.G."/>
            <person name="Reinert K."/>
            <person name="Remington K."/>
            <person name="Saunders R.D.C."/>
            <person name="Scheeler F."/>
            <person name="Shen H."/>
            <person name="Shue B.C."/>
            <person name="Siden-Kiamos I."/>
            <person name="Simpson M."/>
            <person name="Skupski M.P."/>
            <person name="Smith T.J."/>
            <person name="Spier E."/>
            <person name="Spradling A.C."/>
            <person name="Stapleton M."/>
            <person name="Strong R."/>
            <person name="Sun E."/>
            <person name="Svirskas R."/>
            <person name="Tector C."/>
            <person name="Turner R."/>
            <person name="Venter E."/>
            <person name="Wang A.H."/>
            <person name="Wang X."/>
            <person name="Wang Z.-Y."/>
            <person name="Wassarman D.A."/>
            <person name="Weinstock G.M."/>
            <person name="Weissenbach J."/>
            <person name="Williams S.M."/>
            <person name="Woodage T."/>
            <person name="Worley K.C."/>
            <person name="Wu D."/>
            <person name="Yang S."/>
            <person name="Yao Q.A."/>
            <person name="Ye J."/>
            <person name="Yeh R.-F."/>
            <person name="Zaveri J.S."/>
            <person name="Zhan M."/>
            <person name="Zhang G."/>
            <person name="Zhao Q."/>
            <person name="Zheng L."/>
            <person name="Zheng X.H."/>
            <person name="Zhong F.N."/>
            <person name="Zhong W."/>
            <person name="Zhou X."/>
            <person name="Zhu S.C."/>
            <person name="Zhu X."/>
            <person name="Smith H.O."/>
            <person name="Gibbs R.A."/>
            <person name="Myers E.W."/>
            <person name="Rubin G.M."/>
            <person name="Venter J.C."/>
        </authorList>
    </citation>
    <scope>NUCLEOTIDE SEQUENCE [LARGE SCALE GENOMIC DNA]</scope>
    <source>
        <strain evidence="1">Berkeley</strain>
    </source>
</reference>
<reference evidence="3" key="3">
    <citation type="journal article" date="2002" name="Genome Biol.">
        <title>Annotation of the Drosophila melanogaster euchromatic genome: a systematic review.</title>
        <authorList>
            <person name="Misra S."/>
            <person name="Crosby M.A."/>
            <person name="Mungall C.J."/>
            <person name="Matthews B.B."/>
            <person name="Campbell K.S."/>
            <person name="Hradecky P."/>
            <person name="Huang Y."/>
            <person name="Kaminker J.S."/>
            <person name="Millburn G.H."/>
            <person name="Prochnik S.E."/>
            <person name="Smith C.D."/>
            <person name="Tupy J.L."/>
            <person name="Whitfield E.J."/>
            <person name="Bayraktaroglu L."/>
            <person name="Berman B.P."/>
            <person name="Bettencourt B.R."/>
            <person name="Celniker S.E."/>
            <person name="de Grey A.D.N.J."/>
            <person name="Drysdale R.A."/>
            <person name="Harris N.L."/>
            <person name="Richter J."/>
            <person name="Russo S."/>
            <person name="Schroeder A.J."/>
            <person name="Shu S.Q."/>
            <person name="Stapleton M."/>
            <person name="Yamada C."/>
            <person name="Ashburner M."/>
            <person name="Gelbart W.M."/>
            <person name="Rubin G.M."/>
            <person name="Lewis S.E."/>
        </authorList>
    </citation>
    <scope>GENOME REANNOTATION</scope>
    <source>
        <strain>Berkeley</strain>
    </source>
</reference>
<comment type="subcellular location">
    <subcellularLocation>
        <location evidence="2">Cytoplasm</location>
    </subcellularLocation>
    <subcellularLocation>
        <location evidence="2">Nucleus</location>
    </subcellularLocation>
</comment>
<comment type="tissue specificity">
    <text evidence="2">During early embryogenesis expression is initially detected at the early cleavage stages in the nucleus of two discrete cells. Subsequently, expression is abundant in the cytoplasm of the newly formed pole cells. Male-specific expression during the third larval instar.</text>
</comment>
<comment type="miscellaneous">
    <text evidence="2">Mst40 sequences are organized as a tandemly arrayed 1.4 kb repeat unit. The repeat is conserved in all D.melanogaster strains examined but absent from other Drosophila species.</text>
</comment>
<proteinExistence type="evidence at transcript level"/>
<sequence>MFKPGYSEAKKPKITDEFSYKQT</sequence>
<name>MST40_DROME</name>
<feature type="chain" id="PRO_0000076267" description="Protein male-specific 40">
    <location>
        <begin position="1"/>
        <end position="23"/>
    </location>
</feature>
<feature type="sequence conflict" description="In Ref. 2." evidence="3" ref="2">
    <original>M</original>
    <variation>K</variation>
    <location>
        <position position="1"/>
    </location>
</feature>
<organism>
    <name type="scientific">Drosophila melanogaster</name>
    <name type="common">Fruit fly</name>
    <dbReference type="NCBI Taxonomy" id="7227"/>
    <lineage>
        <taxon>Eukaryota</taxon>
        <taxon>Metazoa</taxon>
        <taxon>Ecdysozoa</taxon>
        <taxon>Arthropoda</taxon>
        <taxon>Hexapoda</taxon>
        <taxon>Insecta</taxon>
        <taxon>Pterygota</taxon>
        <taxon>Neoptera</taxon>
        <taxon>Endopterygota</taxon>
        <taxon>Diptera</taxon>
        <taxon>Brachycera</taxon>
        <taxon>Muscomorpha</taxon>
        <taxon>Ephydroidea</taxon>
        <taxon>Drosophilidae</taxon>
        <taxon>Drosophila</taxon>
        <taxon>Sophophora</taxon>
    </lineage>
</organism>
<gene>
    <name evidence="5" type="primary">Mst40</name>
</gene>
<evidence type="ECO:0000269" key="1">
    <source>
    </source>
</evidence>
<evidence type="ECO:0000269" key="2">
    <source>
    </source>
</evidence>
<evidence type="ECO:0000305" key="3"/>
<evidence type="ECO:0000312" key="4">
    <source>
        <dbReference type="EMBL" id="CAA80303.1"/>
    </source>
</evidence>
<evidence type="ECO:0000312" key="5">
    <source>
        <dbReference type="FlyBase" id="FBgn0011667"/>
    </source>
</evidence>
<accession>Q24437</accession>
<protein>
    <recommendedName>
        <fullName>Protein male-specific 40</fullName>
    </recommendedName>
</protein>
<dbReference type="EMBL" id="Z22588">
    <property type="protein sequence ID" value="CAA80303.1"/>
    <property type="molecule type" value="Genomic_DNA"/>
</dbReference>
<dbReference type="EMBL" id="AE014134">
    <property type="status" value="NOT_ANNOTATED_CDS"/>
    <property type="molecule type" value="Genomic_DNA"/>
</dbReference>
<dbReference type="PIR" id="S32727">
    <property type="entry name" value="S32727"/>
</dbReference>
<dbReference type="AGR" id="FB:FBgn0011667"/>
<dbReference type="FlyBase" id="FBgn0011667">
    <property type="gene designation" value="Mst40"/>
</dbReference>
<dbReference type="InParanoid" id="Q24437"/>
<dbReference type="PRO" id="PR:Q24437"/>
<dbReference type="Proteomes" id="UP000000803">
    <property type="component" value="Chromosome 2L"/>
</dbReference>
<dbReference type="GO" id="GO:0005737">
    <property type="term" value="C:cytoplasm"/>
    <property type="evidence" value="ECO:0000314"/>
    <property type="project" value="UniProtKB"/>
</dbReference>
<dbReference type="GO" id="GO:0005634">
    <property type="term" value="C:nucleus"/>
    <property type="evidence" value="ECO:0000314"/>
    <property type="project" value="UniProtKB"/>
</dbReference>